<keyword id="KW-1003">Cell membrane</keyword>
<keyword id="KW-1015">Disulfide bond</keyword>
<keyword id="KW-0254">Endocytosis</keyword>
<keyword id="KW-0325">Glycoprotein</keyword>
<keyword id="KW-0472">Membrane</keyword>
<keyword id="KW-0597">Phosphoprotein</keyword>
<keyword id="KW-0675">Receptor</keyword>
<keyword id="KW-1185">Reference proteome</keyword>
<keyword id="KW-0964">Secreted</keyword>
<keyword id="KW-0732">Signal</keyword>
<keyword id="KW-0812">Transmembrane</keyword>
<keyword id="KW-1133">Transmembrane helix</keyword>
<keyword id="KW-0832">Ubl conjugation</keyword>
<evidence type="ECO:0000250" key="1">
    <source>
        <dbReference type="UniProtKB" id="P10912"/>
    </source>
</evidence>
<evidence type="ECO:0000250" key="2">
    <source>
        <dbReference type="UniProtKB" id="P16310"/>
    </source>
</evidence>
<evidence type="ECO:0000250" key="3">
    <source>
        <dbReference type="UniProtKB" id="P19941"/>
    </source>
</evidence>
<evidence type="ECO:0000255" key="4"/>
<evidence type="ECO:0000255" key="5">
    <source>
        <dbReference type="PROSITE-ProRule" id="PRU00316"/>
    </source>
</evidence>
<evidence type="ECO:0000256" key="6">
    <source>
        <dbReference type="SAM" id="MobiDB-lite"/>
    </source>
</evidence>
<evidence type="ECO:0000303" key="7">
    <source ref="1"/>
</evidence>
<evidence type="ECO:0000305" key="8"/>
<protein>
    <recommendedName>
        <fullName evidence="7">Growth hormone receptor</fullName>
        <shortName>GH receptor</shortName>
    </recommendedName>
    <alternativeName>
        <fullName>Somatotropin receptor</fullName>
    </alternativeName>
    <component>
        <recommendedName>
            <fullName>Growth hormone-binding protein</fullName>
            <shortName>GH-binding protein</shortName>
            <shortName>GHBP</shortName>
        </recommendedName>
        <alternativeName>
            <fullName>Serum-binding protein</fullName>
        </alternativeName>
    </component>
</protein>
<gene>
    <name type="primary">GHR</name>
</gene>
<reference key="1">
    <citation type="submission" date="2001-06" db="EMBL/GenBank/DDBJ databases">
        <title>Molecular cloning of growth hormone receptor in giant panda.</title>
        <authorList>
            <person name="Liao M.J."/>
            <person name="Zhu M.Y."/>
            <person name="Zhang A.J."/>
        </authorList>
    </citation>
    <scope>NUCLEOTIDE SEQUENCE [MRNA]</scope>
    <source>
        <tissue>Liver</tissue>
    </source>
</reference>
<comment type="function">
    <text evidence="1">Receptor for pituitary gland growth hormone (GH1) involved in regulating postnatal body growth. On ligand binding, couples to the JAK2/STAT5 pathway.</text>
</comment>
<comment type="function">
    <molecule>Growth hormone-binding protein</molecule>
    <text evidence="1">The soluble form (GHBP) acts as a reservoir of growth hormone in plasma and may be a modulator/inhibitor of GH signaling.</text>
</comment>
<comment type="subunit">
    <text evidence="1">On growth hormone (GH) binding, forms homodimers and binds JAK2 via a box 1-containing domain.</text>
</comment>
<comment type="subcellular location">
    <subcellularLocation>
        <location evidence="1">Cell membrane</location>
        <topology evidence="4">Single-pass type I membrane protein</topology>
    </subcellularLocation>
    <text evidence="3">On growth hormone binding, GHR is ubiquitinated, internalized, down-regulated and transported into a degradative or non-degradative pathway.</text>
</comment>
<comment type="subcellular location">
    <molecule>Growth hormone-binding protein</molecule>
    <subcellularLocation>
        <location evidence="1">Secreted</location>
    </subcellularLocation>
    <text evidence="1">Complexed to a substantial fraction of circulating GH.</text>
</comment>
<comment type="domain">
    <text evidence="1">The WSXWS motif appears to be necessary for proper protein folding and thereby efficient intracellular transport and cell-surface receptor binding.</text>
</comment>
<comment type="domain">
    <text evidence="2">The box 1 motif is required for JAK interaction and/or activation.</text>
</comment>
<comment type="domain">
    <text evidence="1">The extracellular domain is the ligand-binding domain representing the growth hormone-binding protein (GHBP).</text>
</comment>
<comment type="domain">
    <text evidence="3">The ubiquitination-dependent endocytosis motif (UbE) is required for recruitment of the ubiquitin conjugation system on to the receptor and for its internalization.</text>
</comment>
<comment type="PTM">
    <text evidence="1 3">The soluble form (GHBP) is produced by phorbol ester-promoted proteolytic cleavage at the cell surface (shedding) by ADAM17/TACE (By similarity). Shedding is inhibited by growth hormone (GH) binding to the receptor probably due to a conformational change in GHR rendering the receptor inaccessible to ADAM17 (By similarity).</text>
</comment>
<comment type="PTM">
    <text evidence="1">On GH binding, phosphorylated on tyrosine residues in the cytoplasmic domain by JAK2.</text>
</comment>
<comment type="PTM">
    <text evidence="1 3">Ubiquitinated by the ECS(SOCS2) complex following ligand-binding and phosphorylation by JAK2, leading to its degradation by the proteasome. Regulation by the ECS(SOCS2) complex acts as a negative feedback loop of growth hormone receptor signaling (By similarity). Ubiquitination is not sufficient for GHR internalization (By similarity).</text>
</comment>
<comment type="similarity">
    <text evidence="8">Belongs to the type I cytokine receptor family. Type 1 subfamily.</text>
</comment>
<organism>
    <name type="scientific">Ailuropoda melanoleuca</name>
    <name type="common">Giant panda</name>
    <dbReference type="NCBI Taxonomy" id="9646"/>
    <lineage>
        <taxon>Eukaryota</taxon>
        <taxon>Metazoa</taxon>
        <taxon>Chordata</taxon>
        <taxon>Craniata</taxon>
        <taxon>Vertebrata</taxon>
        <taxon>Euteleostomi</taxon>
        <taxon>Mammalia</taxon>
        <taxon>Eutheria</taxon>
        <taxon>Laurasiatheria</taxon>
        <taxon>Carnivora</taxon>
        <taxon>Caniformia</taxon>
        <taxon>Ursidae</taxon>
        <taxon>Ailuropoda</taxon>
    </lineage>
</organism>
<name>GHR_AILME</name>
<feature type="signal peptide" evidence="4">
    <location>
        <begin position="1"/>
        <end position="18"/>
    </location>
</feature>
<feature type="chain" id="PRO_0000010947" description="Growth hormone receptor">
    <location>
        <begin position="19"/>
        <end position="638"/>
    </location>
</feature>
<feature type="chain" id="PRO_0000010948" description="Growth hormone-binding protein" evidence="3">
    <location>
        <begin position="19"/>
        <end position="256"/>
    </location>
</feature>
<feature type="topological domain" description="Extracellular" evidence="4">
    <location>
        <begin position="19"/>
        <end position="264"/>
    </location>
</feature>
<feature type="transmembrane region" description="Helical" evidence="4">
    <location>
        <begin position="265"/>
        <end position="288"/>
    </location>
</feature>
<feature type="topological domain" description="Cytoplasmic" evidence="4">
    <location>
        <begin position="289"/>
        <end position="638"/>
    </location>
</feature>
<feature type="domain" description="Fibronectin type-III" evidence="5">
    <location>
        <begin position="151"/>
        <end position="254"/>
    </location>
</feature>
<feature type="region of interest" description="Required for JAK2 binding" evidence="2">
    <location>
        <begin position="294"/>
        <end position="379"/>
    </location>
</feature>
<feature type="region of interest" description="Disordered" evidence="6">
    <location>
        <begin position="429"/>
        <end position="448"/>
    </location>
</feature>
<feature type="short sequence motif" description="WSXWS motif" evidence="1">
    <location>
        <begin position="240"/>
        <end position="244"/>
    </location>
</feature>
<feature type="short sequence motif" description="Box 1 motif" evidence="2">
    <location>
        <begin position="297"/>
        <end position="305"/>
    </location>
</feature>
<feature type="short sequence motif" description="UbE motif" evidence="3">
    <location>
        <begin position="340"/>
        <end position="349"/>
    </location>
</feature>
<feature type="compositionally biased region" description="Polar residues" evidence="6">
    <location>
        <begin position="429"/>
        <end position="446"/>
    </location>
</feature>
<feature type="modified residue" description="Phosphoserine" evidence="1">
    <location>
        <position position="341"/>
    </location>
</feature>
<feature type="modified residue" description="Phosphotyrosine" evidence="1">
    <location>
        <position position="487"/>
    </location>
</feature>
<feature type="modified residue" description="Phosphotyrosine" evidence="1">
    <location>
        <position position="595"/>
    </location>
</feature>
<feature type="glycosylation site" description="N-linked (GlcNAc...) asparagine" evidence="4">
    <location>
        <position position="115"/>
    </location>
</feature>
<feature type="glycosylation site" description="N-linked (GlcNAc...) asparagine" evidence="4">
    <location>
        <position position="156"/>
    </location>
</feature>
<feature type="glycosylation site" description="N-linked (GlcNAc...) asparagine" evidence="4">
    <location>
        <position position="161"/>
    </location>
</feature>
<feature type="glycosylation site" description="N-linked (GlcNAc...) asparagine" evidence="4">
    <location>
        <position position="200"/>
    </location>
</feature>
<feature type="disulfide bond" evidence="1">
    <location>
        <begin position="56"/>
        <end position="66"/>
    </location>
</feature>
<feature type="disulfide bond" evidence="1">
    <location>
        <begin position="101"/>
        <end position="112"/>
    </location>
</feature>
<feature type="disulfide bond" evidence="1">
    <location>
        <begin position="126"/>
        <end position="140"/>
    </location>
</feature>
<proteinExistence type="evidence at transcript level"/>
<dbReference type="EMBL" id="AF395535">
    <property type="protein sequence ID" value="AAK72050.1"/>
    <property type="molecule type" value="mRNA"/>
</dbReference>
<dbReference type="RefSeq" id="NP_001291819.1">
    <property type="nucleotide sequence ID" value="NM_001304890.1"/>
</dbReference>
<dbReference type="SMR" id="Q95JF2"/>
<dbReference type="FunCoup" id="Q95JF2">
    <property type="interactions" value="7"/>
</dbReference>
<dbReference type="STRING" id="9646.ENSAMEP00000004058"/>
<dbReference type="GlyCosmos" id="Q95JF2">
    <property type="glycosylation" value="4 sites, No reported glycans"/>
</dbReference>
<dbReference type="GeneID" id="100422780"/>
<dbReference type="KEGG" id="aml:100422780"/>
<dbReference type="CTD" id="2690"/>
<dbReference type="eggNOG" id="KOG3555">
    <property type="taxonomic scope" value="Eukaryota"/>
</dbReference>
<dbReference type="InParanoid" id="Q95JF2"/>
<dbReference type="OrthoDB" id="9890215at2759"/>
<dbReference type="Proteomes" id="UP000008912">
    <property type="component" value="Unassembled WGS sequence"/>
</dbReference>
<dbReference type="GO" id="GO:0009897">
    <property type="term" value="C:external side of plasma membrane"/>
    <property type="evidence" value="ECO:0007669"/>
    <property type="project" value="TreeGrafter"/>
</dbReference>
<dbReference type="GO" id="GO:0005576">
    <property type="term" value="C:extracellular region"/>
    <property type="evidence" value="ECO:0007669"/>
    <property type="project" value="UniProtKB-SubCell"/>
</dbReference>
<dbReference type="GO" id="GO:0004896">
    <property type="term" value="F:cytokine receptor activity"/>
    <property type="evidence" value="ECO:0007669"/>
    <property type="project" value="InterPro"/>
</dbReference>
<dbReference type="GO" id="GO:0006897">
    <property type="term" value="P:endocytosis"/>
    <property type="evidence" value="ECO:0007669"/>
    <property type="project" value="UniProtKB-KW"/>
</dbReference>
<dbReference type="CDD" id="cd00063">
    <property type="entry name" value="FN3"/>
    <property type="match status" value="1"/>
</dbReference>
<dbReference type="FunFam" id="2.60.40.10:FF:000269">
    <property type="entry name" value="Growth hormone receptor"/>
    <property type="match status" value="1"/>
</dbReference>
<dbReference type="FunFam" id="2.60.40.10:FF:000318">
    <property type="entry name" value="Growth hormone receptor"/>
    <property type="match status" value="1"/>
</dbReference>
<dbReference type="Gene3D" id="2.60.40.10">
    <property type="entry name" value="Immunoglobulins"/>
    <property type="match status" value="2"/>
</dbReference>
<dbReference type="InterPro" id="IPR003961">
    <property type="entry name" value="FN3_dom"/>
</dbReference>
<dbReference type="InterPro" id="IPR036116">
    <property type="entry name" value="FN3_sf"/>
</dbReference>
<dbReference type="InterPro" id="IPR025871">
    <property type="entry name" value="GHBP"/>
</dbReference>
<dbReference type="InterPro" id="IPR015152">
    <property type="entry name" value="Growth/epo_recpt_lig-bind"/>
</dbReference>
<dbReference type="InterPro" id="IPR013783">
    <property type="entry name" value="Ig-like_fold"/>
</dbReference>
<dbReference type="InterPro" id="IPR003528">
    <property type="entry name" value="Long_hematopoietin_rcpt_CS"/>
</dbReference>
<dbReference type="PANTHER" id="PTHR23037">
    <property type="entry name" value="CYTOKINE RECEPTOR"/>
    <property type="match status" value="1"/>
</dbReference>
<dbReference type="PANTHER" id="PTHR23037:SF46">
    <property type="entry name" value="INTERLEUKIN 5 RECEPTOR SUBUNIT ALPHA"/>
    <property type="match status" value="1"/>
</dbReference>
<dbReference type="Pfam" id="PF09067">
    <property type="entry name" value="EpoR_lig-bind"/>
    <property type="match status" value="1"/>
</dbReference>
<dbReference type="Pfam" id="PF00041">
    <property type="entry name" value="fn3"/>
    <property type="match status" value="1"/>
</dbReference>
<dbReference type="Pfam" id="PF12772">
    <property type="entry name" value="GHBP"/>
    <property type="match status" value="1"/>
</dbReference>
<dbReference type="SMART" id="SM00060">
    <property type="entry name" value="FN3"/>
    <property type="match status" value="1"/>
</dbReference>
<dbReference type="SUPFAM" id="SSF49265">
    <property type="entry name" value="Fibronectin type III"/>
    <property type="match status" value="2"/>
</dbReference>
<dbReference type="PROSITE" id="PS50853">
    <property type="entry name" value="FN3"/>
    <property type="match status" value="1"/>
</dbReference>
<dbReference type="PROSITE" id="PS01352">
    <property type="entry name" value="HEMATOPO_REC_L_F1"/>
    <property type="match status" value="1"/>
</dbReference>
<accession>Q95JF2</accession>
<sequence>MDLWQLLLTLAVAGSGNAVSGSEATPAILGRASQSLQRVNPGPGTNPSGKPQFTKCRSPELETFSCHWTEGVHHGVKNPGSIQLFYIRRSTQEWTPEWKECPDYVSAGENSCYFNSSYTSIWIPYCIKLTSNGDTVDQKCFSVEEIVQPDPPIGLNWTLLNISLTGIHADIQVRWEPPPNADVQKGWIVLEYELQYKEVNESQWKMMDPVLSTSVPVYSLRLDKEYEVRVRSRQRNSEKYGEFSEVLYVALPQMSPFACEEDFQFPWFLIIIFGIFGLTMILFLFIFSKQQRIKMLILPPVPVPKIKGIDSDLLKEGKLEEVSTILAIHDNYKPEFYNDDSWVEFIELDIDDPDEKTEGSDTDRLLSNDHEKSLNILGAKDDDSGRTSCYEPDILETDFNASDVCDGTSEVAQPQRLKGEIDLLCLDQKNQSNSPSTDTAPNTQQPGVILAKENKPRPLLISGTESTHQAAHPQLSNPSSLANIDFYAQVSDITPAGSVVLSPGQKNKAGIAPCDMPPEVVSLCQANFIMDNAYFCEADAKKCITVAPHVEAESRGEPSFNQEDIYITTESLTTVAGQPGTAERAPSSEIPVPDYTSIHIVQSPRGLVLNATALPLPDKEFLSSCGYVSTDQLNKIMP</sequence>